<name>RF1_BORA1</name>
<organism>
    <name type="scientific">Bordetella avium (strain 197N)</name>
    <dbReference type="NCBI Taxonomy" id="360910"/>
    <lineage>
        <taxon>Bacteria</taxon>
        <taxon>Pseudomonadati</taxon>
        <taxon>Pseudomonadota</taxon>
        <taxon>Betaproteobacteria</taxon>
        <taxon>Burkholderiales</taxon>
        <taxon>Alcaligenaceae</taxon>
        <taxon>Bordetella</taxon>
    </lineage>
</organism>
<dbReference type="EMBL" id="AM167904">
    <property type="protein sequence ID" value="CAJ47902.1"/>
    <property type="status" value="ALT_INIT"/>
    <property type="molecule type" value="Genomic_DNA"/>
</dbReference>
<dbReference type="RefSeq" id="WP_039051975.1">
    <property type="nucleotide sequence ID" value="NC_010645.1"/>
</dbReference>
<dbReference type="SMR" id="Q2KZZ3"/>
<dbReference type="STRING" id="360910.BAV0297"/>
<dbReference type="GeneID" id="92936452"/>
<dbReference type="KEGG" id="bav:BAV0297"/>
<dbReference type="eggNOG" id="COG0216">
    <property type="taxonomic scope" value="Bacteria"/>
</dbReference>
<dbReference type="HOGENOM" id="CLU_036856_0_1_4"/>
<dbReference type="OrthoDB" id="9806673at2"/>
<dbReference type="Proteomes" id="UP000001977">
    <property type="component" value="Chromosome"/>
</dbReference>
<dbReference type="GO" id="GO:0005737">
    <property type="term" value="C:cytoplasm"/>
    <property type="evidence" value="ECO:0007669"/>
    <property type="project" value="UniProtKB-SubCell"/>
</dbReference>
<dbReference type="GO" id="GO:0016149">
    <property type="term" value="F:translation release factor activity, codon specific"/>
    <property type="evidence" value="ECO:0007669"/>
    <property type="project" value="UniProtKB-UniRule"/>
</dbReference>
<dbReference type="FunFam" id="3.30.160.20:FF:000004">
    <property type="entry name" value="Peptide chain release factor 1"/>
    <property type="match status" value="1"/>
</dbReference>
<dbReference type="FunFam" id="3.30.70.1660:FF:000002">
    <property type="entry name" value="Peptide chain release factor 1"/>
    <property type="match status" value="1"/>
</dbReference>
<dbReference type="FunFam" id="3.30.70.1660:FF:000004">
    <property type="entry name" value="Peptide chain release factor 1"/>
    <property type="match status" value="1"/>
</dbReference>
<dbReference type="Gene3D" id="3.30.160.20">
    <property type="match status" value="1"/>
</dbReference>
<dbReference type="Gene3D" id="3.30.70.1660">
    <property type="match status" value="2"/>
</dbReference>
<dbReference type="Gene3D" id="6.10.140.1950">
    <property type="match status" value="1"/>
</dbReference>
<dbReference type="HAMAP" id="MF_00093">
    <property type="entry name" value="Rel_fac_1"/>
    <property type="match status" value="1"/>
</dbReference>
<dbReference type="InterPro" id="IPR005139">
    <property type="entry name" value="PCRF"/>
</dbReference>
<dbReference type="InterPro" id="IPR000352">
    <property type="entry name" value="Pep_chain_release_fac_I"/>
</dbReference>
<dbReference type="InterPro" id="IPR045853">
    <property type="entry name" value="Pep_chain_release_fac_I_sf"/>
</dbReference>
<dbReference type="InterPro" id="IPR050057">
    <property type="entry name" value="Prokaryotic/Mito_RF"/>
</dbReference>
<dbReference type="InterPro" id="IPR004373">
    <property type="entry name" value="RF-1"/>
</dbReference>
<dbReference type="NCBIfam" id="TIGR00019">
    <property type="entry name" value="prfA"/>
    <property type="match status" value="1"/>
</dbReference>
<dbReference type="NCBIfam" id="NF001859">
    <property type="entry name" value="PRK00591.1"/>
    <property type="match status" value="1"/>
</dbReference>
<dbReference type="PANTHER" id="PTHR43804">
    <property type="entry name" value="LD18447P"/>
    <property type="match status" value="1"/>
</dbReference>
<dbReference type="PANTHER" id="PTHR43804:SF7">
    <property type="entry name" value="LD18447P"/>
    <property type="match status" value="1"/>
</dbReference>
<dbReference type="Pfam" id="PF03462">
    <property type="entry name" value="PCRF"/>
    <property type="match status" value="1"/>
</dbReference>
<dbReference type="Pfam" id="PF00472">
    <property type="entry name" value="RF-1"/>
    <property type="match status" value="1"/>
</dbReference>
<dbReference type="SMART" id="SM00937">
    <property type="entry name" value="PCRF"/>
    <property type="match status" value="1"/>
</dbReference>
<dbReference type="SUPFAM" id="SSF75620">
    <property type="entry name" value="Release factor"/>
    <property type="match status" value="1"/>
</dbReference>
<dbReference type="PROSITE" id="PS00745">
    <property type="entry name" value="RF_PROK_I"/>
    <property type="match status" value="1"/>
</dbReference>
<gene>
    <name evidence="1" type="primary">prfA</name>
    <name type="ordered locus">BAV0297</name>
</gene>
<proteinExistence type="inferred from homology"/>
<feature type="chain" id="PRO_0000263240" description="Peptide chain release factor 1">
    <location>
        <begin position="1"/>
        <end position="360"/>
    </location>
</feature>
<feature type="region of interest" description="Disordered" evidence="2">
    <location>
        <begin position="284"/>
        <end position="303"/>
    </location>
</feature>
<feature type="modified residue" description="N5-methylglutamine" evidence="1">
    <location>
        <position position="235"/>
    </location>
</feature>
<comment type="function">
    <text evidence="1">Peptide chain release factor 1 directs the termination of translation in response to the peptide chain termination codons UAG and UAA.</text>
</comment>
<comment type="subcellular location">
    <subcellularLocation>
        <location evidence="1">Cytoplasm</location>
    </subcellularLocation>
</comment>
<comment type="PTM">
    <text evidence="1">Methylated by PrmC. Methylation increases the termination efficiency of RF1.</text>
</comment>
<comment type="similarity">
    <text evidence="1">Belongs to the prokaryotic/mitochondrial release factor family.</text>
</comment>
<comment type="sequence caution" evidence="3">
    <conflict type="erroneous initiation">
        <sequence resource="EMBL-CDS" id="CAJ47902"/>
    </conflict>
</comment>
<sequence length="360" mass="40062">MKSSMLGRLEQLAHRLIEVDALLADPDSAGDMDRFRRLSRERAELEPVVLAFNAFQSTQADLATAQEMLADPEMKAMAEEEIKAARERIEVLEGELQVLLLPRDPNDGRSLFLEIRAGTGGDESALFSGDLLRMYSRYAESQGWRVEIMSESPSELGGYKEVIARIDGDGAYGRLKFESGAHRVQRVPATEAQGRIHTSACTVAVMPEADEMNDIVINPADLRIDTFRASGAGGQHINKTDSAVRITHLPTGLVVECQDDRSQHRNKDRAMQVLAARLKDKELRERQSKEAAERKSLVGSGDRSERIRTYNYPQGRVTDHRINLTLYKLQQILEGDLNELTGALLAEHQAEQLAALGEDI</sequence>
<reference key="1">
    <citation type="journal article" date="2006" name="J. Bacteriol.">
        <title>Comparison of the genome sequence of the poultry pathogen Bordetella avium with those of B. bronchiseptica, B. pertussis, and B. parapertussis reveals extensive diversity in surface structures associated with host interaction.</title>
        <authorList>
            <person name="Sebaihia M."/>
            <person name="Preston A."/>
            <person name="Maskell D.J."/>
            <person name="Kuzmiak H."/>
            <person name="Connell T.D."/>
            <person name="King N.D."/>
            <person name="Orndorff P.E."/>
            <person name="Miyamoto D.M."/>
            <person name="Thomson N.R."/>
            <person name="Harris D."/>
            <person name="Goble A."/>
            <person name="Lord A."/>
            <person name="Murphy L."/>
            <person name="Quail M.A."/>
            <person name="Rutter S."/>
            <person name="Squares R."/>
            <person name="Squares S."/>
            <person name="Woodward J."/>
            <person name="Parkhill J."/>
            <person name="Temple L.M."/>
        </authorList>
    </citation>
    <scope>NUCLEOTIDE SEQUENCE [LARGE SCALE GENOMIC DNA]</scope>
    <source>
        <strain>197N</strain>
    </source>
</reference>
<evidence type="ECO:0000255" key="1">
    <source>
        <dbReference type="HAMAP-Rule" id="MF_00093"/>
    </source>
</evidence>
<evidence type="ECO:0000256" key="2">
    <source>
        <dbReference type="SAM" id="MobiDB-lite"/>
    </source>
</evidence>
<evidence type="ECO:0000305" key="3"/>
<keyword id="KW-0963">Cytoplasm</keyword>
<keyword id="KW-0488">Methylation</keyword>
<keyword id="KW-0648">Protein biosynthesis</keyword>
<keyword id="KW-1185">Reference proteome</keyword>
<accession>Q2KZZ3</accession>
<protein>
    <recommendedName>
        <fullName evidence="1">Peptide chain release factor 1</fullName>
        <shortName evidence="1">RF-1</shortName>
    </recommendedName>
</protein>